<evidence type="ECO:0000250" key="1"/>
<evidence type="ECO:0000305" key="2"/>
<sequence length="501" mass="56760">MSEQTQELDLNGEMLVRREKLAALRAKGNPFPNTFRRDALAQDLHANYDALEGEALKAQEVEVKVAGRIMTRRAMGKATFITLQDMSGRIQLYVARDNLPEGIYADDVGQWDLGDIIGVKGTLFKTKTNELTVRCTEVQLLTKALRPLPDKFHGLSDQETRYRQRYLDLIANEDSRRTFIIRSKVIAGIREYFLSKGFMEVETPMLQIIPGGASARPFVTHHNALDVDMYLRIAPELYLKRLVVGGFERVFELNRNFRNEGVSVRHNPEFTMLEYYQAYADYHDLMDNTEELLRKLAMDILGTTIVPYGELEFDFGKPFERITMHDAILKYGAEKGIVKEDLYDFDRAVAVAKKLGIEVQKSWGLGSLVNVIFEEVAEHHLIQPTFLMAHPAEISPLARRNDENPEVTDRFELFIGGREIGNGFSELNDAEDQNERFDAQVAAKEAGDDEAMFKDEDFVTALEHGLPPTAGEGLGIDRLAMLFANAASIRDVILFPAMKQK</sequence>
<dbReference type="EC" id="6.1.1.6"/>
<dbReference type="EMBL" id="AE004439">
    <property type="protein sequence ID" value="AAK02273.1"/>
    <property type="molecule type" value="Genomic_DNA"/>
</dbReference>
<dbReference type="RefSeq" id="WP_010906519.1">
    <property type="nucleotide sequence ID" value="NC_002663.1"/>
</dbReference>
<dbReference type="SMR" id="P57822"/>
<dbReference type="STRING" id="272843.PM0189"/>
<dbReference type="EnsemblBacteria" id="AAK02273">
    <property type="protein sequence ID" value="AAK02273"/>
    <property type="gene ID" value="PM0189"/>
</dbReference>
<dbReference type="KEGG" id="pmu:PM0189"/>
<dbReference type="PATRIC" id="fig|272843.6.peg.194"/>
<dbReference type="HOGENOM" id="CLU_008255_6_0_6"/>
<dbReference type="OrthoDB" id="9802326at2"/>
<dbReference type="Proteomes" id="UP000000809">
    <property type="component" value="Chromosome"/>
</dbReference>
<dbReference type="GO" id="GO:0005829">
    <property type="term" value="C:cytosol"/>
    <property type="evidence" value="ECO:0007669"/>
    <property type="project" value="TreeGrafter"/>
</dbReference>
<dbReference type="GO" id="GO:0005524">
    <property type="term" value="F:ATP binding"/>
    <property type="evidence" value="ECO:0007669"/>
    <property type="project" value="UniProtKB-UniRule"/>
</dbReference>
<dbReference type="GO" id="GO:0004824">
    <property type="term" value="F:lysine-tRNA ligase activity"/>
    <property type="evidence" value="ECO:0007669"/>
    <property type="project" value="UniProtKB-UniRule"/>
</dbReference>
<dbReference type="GO" id="GO:0000287">
    <property type="term" value="F:magnesium ion binding"/>
    <property type="evidence" value="ECO:0007669"/>
    <property type="project" value="UniProtKB-UniRule"/>
</dbReference>
<dbReference type="GO" id="GO:0000049">
    <property type="term" value="F:tRNA binding"/>
    <property type="evidence" value="ECO:0007669"/>
    <property type="project" value="TreeGrafter"/>
</dbReference>
<dbReference type="GO" id="GO:0006430">
    <property type="term" value="P:lysyl-tRNA aminoacylation"/>
    <property type="evidence" value="ECO:0007669"/>
    <property type="project" value="UniProtKB-UniRule"/>
</dbReference>
<dbReference type="CDD" id="cd00775">
    <property type="entry name" value="LysRS_core"/>
    <property type="match status" value="1"/>
</dbReference>
<dbReference type="CDD" id="cd04322">
    <property type="entry name" value="LysRS_N"/>
    <property type="match status" value="1"/>
</dbReference>
<dbReference type="FunFam" id="2.40.50.140:FF:000024">
    <property type="entry name" value="Lysine--tRNA ligase"/>
    <property type="match status" value="1"/>
</dbReference>
<dbReference type="FunFam" id="3.30.930.10:FF:000001">
    <property type="entry name" value="Lysine--tRNA ligase"/>
    <property type="match status" value="1"/>
</dbReference>
<dbReference type="Gene3D" id="3.30.930.10">
    <property type="entry name" value="Bira Bifunctional Protein, Domain 2"/>
    <property type="match status" value="1"/>
</dbReference>
<dbReference type="Gene3D" id="2.40.50.140">
    <property type="entry name" value="Nucleic acid-binding proteins"/>
    <property type="match status" value="1"/>
</dbReference>
<dbReference type="HAMAP" id="MF_00252">
    <property type="entry name" value="Lys_tRNA_synth_class2"/>
    <property type="match status" value="1"/>
</dbReference>
<dbReference type="InterPro" id="IPR004364">
    <property type="entry name" value="Aa-tRNA-synt_II"/>
</dbReference>
<dbReference type="InterPro" id="IPR006195">
    <property type="entry name" value="aa-tRNA-synth_II"/>
</dbReference>
<dbReference type="InterPro" id="IPR045864">
    <property type="entry name" value="aa-tRNA-synth_II/BPL/LPL"/>
</dbReference>
<dbReference type="InterPro" id="IPR002313">
    <property type="entry name" value="Lys-tRNA-ligase_II"/>
</dbReference>
<dbReference type="InterPro" id="IPR034762">
    <property type="entry name" value="Lys-tRNA-ligase_II_bac/euk"/>
</dbReference>
<dbReference type="InterPro" id="IPR044136">
    <property type="entry name" value="Lys-tRNA-ligase_II_N"/>
</dbReference>
<dbReference type="InterPro" id="IPR018149">
    <property type="entry name" value="Lys-tRNA-synth_II_C"/>
</dbReference>
<dbReference type="InterPro" id="IPR012340">
    <property type="entry name" value="NA-bd_OB-fold"/>
</dbReference>
<dbReference type="InterPro" id="IPR004365">
    <property type="entry name" value="NA-bd_OB_tRNA"/>
</dbReference>
<dbReference type="NCBIfam" id="TIGR00499">
    <property type="entry name" value="lysS_bact"/>
    <property type="match status" value="1"/>
</dbReference>
<dbReference type="NCBIfam" id="NF001756">
    <property type="entry name" value="PRK00484.1"/>
    <property type="match status" value="1"/>
</dbReference>
<dbReference type="PANTHER" id="PTHR42918:SF15">
    <property type="entry name" value="LYSINE--TRNA LIGASE, CHLOROPLASTIC_MITOCHONDRIAL"/>
    <property type="match status" value="1"/>
</dbReference>
<dbReference type="PANTHER" id="PTHR42918">
    <property type="entry name" value="LYSYL-TRNA SYNTHETASE"/>
    <property type="match status" value="1"/>
</dbReference>
<dbReference type="Pfam" id="PF00152">
    <property type="entry name" value="tRNA-synt_2"/>
    <property type="match status" value="1"/>
</dbReference>
<dbReference type="Pfam" id="PF01336">
    <property type="entry name" value="tRNA_anti-codon"/>
    <property type="match status" value="1"/>
</dbReference>
<dbReference type="PIRSF" id="PIRSF039101">
    <property type="entry name" value="LysRS2"/>
    <property type="match status" value="1"/>
</dbReference>
<dbReference type="PRINTS" id="PR00982">
    <property type="entry name" value="TRNASYNTHLYS"/>
</dbReference>
<dbReference type="SUPFAM" id="SSF55681">
    <property type="entry name" value="Class II aaRS and biotin synthetases"/>
    <property type="match status" value="1"/>
</dbReference>
<dbReference type="SUPFAM" id="SSF50249">
    <property type="entry name" value="Nucleic acid-binding proteins"/>
    <property type="match status" value="1"/>
</dbReference>
<dbReference type="PROSITE" id="PS50862">
    <property type="entry name" value="AA_TRNA_LIGASE_II"/>
    <property type="match status" value="1"/>
</dbReference>
<feature type="chain" id="PRO_0000152662" description="Lysine--tRNA ligase">
    <location>
        <begin position="1"/>
        <end position="501"/>
    </location>
</feature>
<feature type="binding site" evidence="1">
    <location>
        <position position="412"/>
    </location>
    <ligand>
        <name>Mg(2+)</name>
        <dbReference type="ChEBI" id="CHEBI:18420"/>
        <label>1</label>
    </ligand>
</feature>
<feature type="binding site" evidence="1">
    <location>
        <position position="419"/>
    </location>
    <ligand>
        <name>Mg(2+)</name>
        <dbReference type="ChEBI" id="CHEBI:18420"/>
        <label>1</label>
    </ligand>
</feature>
<feature type="binding site" evidence="1">
    <location>
        <position position="419"/>
    </location>
    <ligand>
        <name>Mg(2+)</name>
        <dbReference type="ChEBI" id="CHEBI:18420"/>
        <label>2</label>
    </ligand>
</feature>
<keyword id="KW-0030">Aminoacyl-tRNA synthetase</keyword>
<keyword id="KW-0067">ATP-binding</keyword>
<keyword id="KW-0963">Cytoplasm</keyword>
<keyword id="KW-0436">Ligase</keyword>
<keyword id="KW-0460">Magnesium</keyword>
<keyword id="KW-0479">Metal-binding</keyword>
<keyword id="KW-0547">Nucleotide-binding</keyword>
<keyword id="KW-0648">Protein biosynthesis</keyword>
<keyword id="KW-1185">Reference proteome</keyword>
<name>SYK_PASMU</name>
<reference key="1">
    <citation type="journal article" date="2001" name="Proc. Natl. Acad. Sci. U.S.A.">
        <title>Complete genomic sequence of Pasteurella multocida Pm70.</title>
        <authorList>
            <person name="May B.J."/>
            <person name="Zhang Q."/>
            <person name="Li L.L."/>
            <person name="Paustian M.L."/>
            <person name="Whittam T.S."/>
            <person name="Kapur V."/>
        </authorList>
    </citation>
    <scope>NUCLEOTIDE SEQUENCE [LARGE SCALE GENOMIC DNA]</scope>
    <source>
        <strain>Pm70</strain>
    </source>
</reference>
<proteinExistence type="inferred from homology"/>
<comment type="catalytic activity">
    <reaction>
        <text>tRNA(Lys) + L-lysine + ATP = L-lysyl-tRNA(Lys) + AMP + diphosphate</text>
        <dbReference type="Rhea" id="RHEA:20792"/>
        <dbReference type="Rhea" id="RHEA-COMP:9696"/>
        <dbReference type="Rhea" id="RHEA-COMP:9697"/>
        <dbReference type="ChEBI" id="CHEBI:30616"/>
        <dbReference type="ChEBI" id="CHEBI:32551"/>
        <dbReference type="ChEBI" id="CHEBI:33019"/>
        <dbReference type="ChEBI" id="CHEBI:78442"/>
        <dbReference type="ChEBI" id="CHEBI:78529"/>
        <dbReference type="ChEBI" id="CHEBI:456215"/>
        <dbReference type="EC" id="6.1.1.6"/>
    </reaction>
</comment>
<comment type="cofactor">
    <cofactor evidence="1">
        <name>Mg(2+)</name>
        <dbReference type="ChEBI" id="CHEBI:18420"/>
    </cofactor>
    <text evidence="1">Binds 3 Mg(2+) ions per subunit.</text>
</comment>
<comment type="subunit">
    <text evidence="1">Homodimer.</text>
</comment>
<comment type="subcellular location">
    <subcellularLocation>
        <location evidence="1">Cytoplasm</location>
    </subcellularLocation>
</comment>
<comment type="similarity">
    <text evidence="2">Belongs to the class-II aminoacyl-tRNA synthetase family.</text>
</comment>
<gene>
    <name type="primary">lysS</name>
    <name type="synonym">lysU</name>
    <name type="ordered locus">PM0189</name>
</gene>
<accession>P57822</accession>
<organism>
    <name type="scientific">Pasteurella multocida (strain Pm70)</name>
    <dbReference type="NCBI Taxonomy" id="272843"/>
    <lineage>
        <taxon>Bacteria</taxon>
        <taxon>Pseudomonadati</taxon>
        <taxon>Pseudomonadota</taxon>
        <taxon>Gammaproteobacteria</taxon>
        <taxon>Pasteurellales</taxon>
        <taxon>Pasteurellaceae</taxon>
        <taxon>Pasteurella</taxon>
    </lineage>
</organism>
<protein>
    <recommendedName>
        <fullName>Lysine--tRNA ligase</fullName>
        <ecNumber>6.1.1.6</ecNumber>
    </recommendedName>
    <alternativeName>
        <fullName>Lysyl-tRNA synthetase</fullName>
        <shortName>LysRS</shortName>
    </alternativeName>
</protein>